<feature type="chain" id="PRO_1000144575" description="Large ribosomal subunit protein uL23">
    <location>
        <begin position="1"/>
        <end position="93"/>
    </location>
</feature>
<evidence type="ECO:0000255" key="1">
    <source>
        <dbReference type="HAMAP-Rule" id="MF_01369"/>
    </source>
</evidence>
<evidence type="ECO:0000305" key="2"/>
<dbReference type="EMBL" id="CP001072">
    <property type="protein sequence ID" value="ACD48762.1"/>
    <property type="molecule type" value="Genomic_DNA"/>
</dbReference>
<dbReference type="RefSeq" id="WP_000763613.1">
    <property type="nucleotide sequence ID" value="NC_010698.2"/>
</dbReference>
<dbReference type="SMR" id="B2UV80"/>
<dbReference type="KEGG" id="hps:HPSH_06810"/>
<dbReference type="HOGENOM" id="CLU_037562_3_1_7"/>
<dbReference type="GO" id="GO:1990904">
    <property type="term" value="C:ribonucleoprotein complex"/>
    <property type="evidence" value="ECO:0007669"/>
    <property type="project" value="UniProtKB-KW"/>
</dbReference>
<dbReference type="GO" id="GO:0005840">
    <property type="term" value="C:ribosome"/>
    <property type="evidence" value="ECO:0007669"/>
    <property type="project" value="UniProtKB-KW"/>
</dbReference>
<dbReference type="GO" id="GO:0019843">
    <property type="term" value="F:rRNA binding"/>
    <property type="evidence" value="ECO:0007669"/>
    <property type="project" value="UniProtKB-UniRule"/>
</dbReference>
<dbReference type="GO" id="GO:0003735">
    <property type="term" value="F:structural constituent of ribosome"/>
    <property type="evidence" value="ECO:0007669"/>
    <property type="project" value="InterPro"/>
</dbReference>
<dbReference type="GO" id="GO:0006412">
    <property type="term" value="P:translation"/>
    <property type="evidence" value="ECO:0007669"/>
    <property type="project" value="UniProtKB-UniRule"/>
</dbReference>
<dbReference type="Gene3D" id="3.30.70.330">
    <property type="match status" value="1"/>
</dbReference>
<dbReference type="HAMAP" id="MF_01369_B">
    <property type="entry name" value="Ribosomal_uL23_B"/>
    <property type="match status" value="1"/>
</dbReference>
<dbReference type="InterPro" id="IPR012677">
    <property type="entry name" value="Nucleotide-bd_a/b_plait_sf"/>
</dbReference>
<dbReference type="InterPro" id="IPR013025">
    <property type="entry name" value="Ribosomal_uL23-like"/>
</dbReference>
<dbReference type="InterPro" id="IPR012678">
    <property type="entry name" value="Ribosomal_uL23/eL15/eS24_sf"/>
</dbReference>
<dbReference type="NCBIfam" id="NF004362">
    <property type="entry name" value="PRK05738.2-2"/>
    <property type="match status" value="1"/>
</dbReference>
<dbReference type="Pfam" id="PF00276">
    <property type="entry name" value="Ribosomal_L23"/>
    <property type="match status" value="1"/>
</dbReference>
<dbReference type="SUPFAM" id="SSF54189">
    <property type="entry name" value="Ribosomal proteins S24e, L23 and L15e"/>
    <property type="match status" value="1"/>
</dbReference>
<protein>
    <recommendedName>
        <fullName evidence="1">Large ribosomal subunit protein uL23</fullName>
    </recommendedName>
    <alternativeName>
        <fullName evidence="2">50S ribosomal protein L23</fullName>
    </alternativeName>
</protein>
<reference key="1">
    <citation type="submission" date="2008-05" db="EMBL/GenBank/DDBJ databases">
        <title>Genome sequence of Helicobacter pylori from the remote Amazon: traces of Asian ancestry of the first Americans.</title>
        <authorList>
            <person name="Kersulyte D."/>
            <person name="Kalia A."/>
            <person name="Gilman R.H."/>
            <person name="Berg D.E."/>
        </authorList>
    </citation>
    <scope>NUCLEOTIDE SEQUENCE [LARGE SCALE GENOMIC DNA]</scope>
    <source>
        <strain>Shi470</strain>
    </source>
</reference>
<organism>
    <name type="scientific">Helicobacter pylori (strain Shi470)</name>
    <dbReference type="NCBI Taxonomy" id="512562"/>
    <lineage>
        <taxon>Bacteria</taxon>
        <taxon>Pseudomonadati</taxon>
        <taxon>Campylobacterota</taxon>
        <taxon>Epsilonproteobacteria</taxon>
        <taxon>Campylobacterales</taxon>
        <taxon>Helicobacteraceae</taxon>
        <taxon>Helicobacter</taxon>
    </lineage>
</organism>
<accession>B2UV80</accession>
<keyword id="KW-0687">Ribonucleoprotein</keyword>
<keyword id="KW-0689">Ribosomal protein</keyword>
<keyword id="KW-0694">RNA-binding</keyword>
<keyword id="KW-0699">rRNA-binding</keyword>
<sequence>MADIMDIKSILYTEKSLGLQEKGVLVVQTAQNVTKNQLKEVFKTYFGFEPLKINSLKQEGKVKRFRGKLGQRKSFKKFYVKVPEGASIAALGA</sequence>
<gene>
    <name evidence="1" type="primary">rplW</name>
    <name type="ordered locus">HPSH_06810</name>
</gene>
<name>RL23_HELPS</name>
<comment type="function">
    <text evidence="1">One of the early assembly proteins it binds 23S rRNA. One of the proteins that surrounds the polypeptide exit tunnel on the outside of the ribosome. Forms the main docking site for trigger factor binding to the ribosome.</text>
</comment>
<comment type="subunit">
    <text evidence="1">Part of the 50S ribosomal subunit. Contacts protein L29, and trigger factor when it is bound to the ribosome.</text>
</comment>
<comment type="similarity">
    <text evidence="1">Belongs to the universal ribosomal protein uL23 family.</text>
</comment>
<proteinExistence type="inferred from homology"/>